<protein>
    <recommendedName>
        <fullName evidence="2">Elongation factor Tu</fullName>
        <shortName evidence="2">EF-Tu</shortName>
        <ecNumber evidence="2">3.6.5.3</ecNumber>
    </recommendedName>
</protein>
<name>EFTU_STACT</name>
<dbReference type="EC" id="3.6.5.3" evidence="2"/>
<dbReference type="EMBL" id="AM295250">
    <property type="protein sequence ID" value="CAL27120.1"/>
    <property type="molecule type" value="Genomic_DNA"/>
</dbReference>
<dbReference type="RefSeq" id="WP_012664235.1">
    <property type="nucleotide sequence ID" value="NC_012121.1"/>
</dbReference>
<dbReference type="SMR" id="B9DKV8"/>
<dbReference type="GeneID" id="93795136"/>
<dbReference type="KEGG" id="sca:SCA_0207"/>
<dbReference type="eggNOG" id="COG0050">
    <property type="taxonomic scope" value="Bacteria"/>
</dbReference>
<dbReference type="HOGENOM" id="CLU_007265_0_1_9"/>
<dbReference type="OrthoDB" id="9804504at2"/>
<dbReference type="BioCyc" id="SCAR396513:SCA_RS01060-MONOMER"/>
<dbReference type="Proteomes" id="UP000000444">
    <property type="component" value="Chromosome"/>
</dbReference>
<dbReference type="GO" id="GO:0005829">
    <property type="term" value="C:cytosol"/>
    <property type="evidence" value="ECO:0007669"/>
    <property type="project" value="TreeGrafter"/>
</dbReference>
<dbReference type="GO" id="GO:0005525">
    <property type="term" value="F:GTP binding"/>
    <property type="evidence" value="ECO:0007669"/>
    <property type="project" value="UniProtKB-UniRule"/>
</dbReference>
<dbReference type="GO" id="GO:0003924">
    <property type="term" value="F:GTPase activity"/>
    <property type="evidence" value="ECO:0007669"/>
    <property type="project" value="InterPro"/>
</dbReference>
<dbReference type="GO" id="GO:0003746">
    <property type="term" value="F:translation elongation factor activity"/>
    <property type="evidence" value="ECO:0007669"/>
    <property type="project" value="UniProtKB-UniRule"/>
</dbReference>
<dbReference type="CDD" id="cd01884">
    <property type="entry name" value="EF_Tu"/>
    <property type="match status" value="1"/>
</dbReference>
<dbReference type="CDD" id="cd03697">
    <property type="entry name" value="EFTU_II"/>
    <property type="match status" value="1"/>
</dbReference>
<dbReference type="CDD" id="cd03707">
    <property type="entry name" value="EFTU_III"/>
    <property type="match status" value="1"/>
</dbReference>
<dbReference type="FunFam" id="2.40.30.10:FF:000001">
    <property type="entry name" value="Elongation factor Tu"/>
    <property type="match status" value="1"/>
</dbReference>
<dbReference type="FunFam" id="3.40.50.300:FF:000003">
    <property type="entry name" value="Elongation factor Tu"/>
    <property type="match status" value="1"/>
</dbReference>
<dbReference type="Gene3D" id="3.40.50.300">
    <property type="entry name" value="P-loop containing nucleotide triphosphate hydrolases"/>
    <property type="match status" value="1"/>
</dbReference>
<dbReference type="Gene3D" id="2.40.30.10">
    <property type="entry name" value="Translation factors"/>
    <property type="match status" value="2"/>
</dbReference>
<dbReference type="HAMAP" id="MF_00118_B">
    <property type="entry name" value="EF_Tu_B"/>
    <property type="match status" value="1"/>
</dbReference>
<dbReference type="InterPro" id="IPR041709">
    <property type="entry name" value="EF-Tu_GTP-bd"/>
</dbReference>
<dbReference type="InterPro" id="IPR050055">
    <property type="entry name" value="EF-Tu_GTPase"/>
</dbReference>
<dbReference type="InterPro" id="IPR004161">
    <property type="entry name" value="EFTu-like_2"/>
</dbReference>
<dbReference type="InterPro" id="IPR033720">
    <property type="entry name" value="EFTU_2"/>
</dbReference>
<dbReference type="InterPro" id="IPR031157">
    <property type="entry name" value="G_TR_CS"/>
</dbReference>
<dbReference type="InterPro" id="IPR027417">
    <property type="entry name" value="P-loop_NTPase"/>
</dbReference>
<dbReference type="InterPro" id="IPR005225">
    <property type="entry name" value="Small_GTP-bd"/>
</dbReference>
<dbReference type="InterPro" id="IPR000795">
    <property type="entry name" value="T_Tr_GTP-bd_dom"/>
</dbReference>
<dbReference type="InterPro" id="IPR009000">
    <property type="entry name" value="Transl_B-barrel_sf"/>
</dbReference>
<dbReference type="InterPro" id="IPR009001">
    <property type="entry name" value="Transl_elong_EF1A/Init_IF2_C"/>
</dbReference>
<dbReference type="InterPro" id="IPR004541">
    <property type="entry name" value="Transl_elong_EFTu/EF1A_bac/org"/>
</dbReference>
<dbReference type="InterPro" id="IPR004160">
    <property type="entry name" value="Transl_elong_EFTu/EF1A_C"/>
</dbReference>
<dbReference type="NCBIfam" id="TIGR00485">
    <property type="entry name" value="EF-Tu"/>
    <property type="match status" value="1"/>
</dbReference>
<dbReference type="NCBIfam" id="NF000766">
    <property type="entry name" value="PRK00049.1"/>
    <property type="match status" value="1"/>
</dbReference>
<dbReference type="NCBIfam" id="NF009372">
    <property type="entry name" value="PRK12735.1"/>
    <property type="match status" value="1"/>
</dbReference>
<dbReference type="NCBIfam" id="NF009373">
    <property type="entry name" value="PRK12736.1"/>
    <property type="match status" value="1"/>
</dbReference>
<dbReference type="NCBIfam" id="TIGR00231">
    <property type="entry name" value="small_GTP"/>
    <property type="match status" value="1"/>
</dbReference>
<dbReference type="PANTHER" id="PTHR43721:SF22">
    <property type="entry name" value="ELONGATION FACTOR TU, MITOCHONDRIAL"/>
    <property type="match status" value="1"/>
</dbReference>
<dbReference type="PANTHER" id="PTHR43721">
    <property type="entry name" value="ELONGATION FACTOR TU-RELATED"/>
    <property type="match status" value="1"/>
</dbReference>
<dbReference type="Pfam" id="PF00009">
    <property type="entry name" value="GTP_EFTU"/>
    <property type="match status" value="1"/>
</dbReference>
<dbReference type="Pfam" id="PF03144">
    <property type="entry name" value="GTP_EFTU_D2"/>
    <property type="match status" value="1"/>
</dbReference>
<dbReference type="Pfam" id="PF03143">
    <property type="entry name" value="GTP_EFTU_D3"/>
    <property type="match status" value="1"/>
</dbReference>
<dbReference type="PRINTS" id="PR00315">
    <property type="entry name" value="ELONGATNFCT"/>
</dbReference>
<dbReference type="SUPFAM" id="SSF50465">
    <property type="entry name" value="EF-Tu/eEF-1alpha/eIF2-gamma C-terminal domain"/>
    <property type="match status" value="1"/>
</dbReference>
<dbReference type="SUPFAM" id="SSF52540">
    <property type="entry name" value="P-loop containing nucleoside triphosphate hydrolases"/>
    <property type="match status" value="1"/>
</dbReference>
<dbReference type="SUPFAM" id="SSF50447">
    <property type="entry name" value="Translation proteins"/>
    <property type="match status" value="1"/>
</dbReference>
<dbReference type="PROSITE" id="PS00301">
    <property type="entry name" value="G_TR_1"/>
    <property type="match status" value="1"/>
</dbReference>
<dbReference type="PROSITE" id="PS51722">
    <property type="entry name" value="G_TR_2"/>
    <property type="match status" value="1"/>
</dbReference>
<accession>B9DKV8</accession>
<gene>
    <name evidence="2" type="primary">tuf</name>
    <name type="ordered locus">Sca_0207</name>
</gene>
<proteinExistence type="inferred from homology"/>
<sequence>MAKEKFDRSKEHANIGTIGHVDHGKTTLTAAIATVLAKNGDTVAQSYDMIDNAPEEKERGITINTSHIEYQTDKRHYAHVDCPGHADYVKNMITGAAQMDGGILVVSAADGPMPQTREHILLSRNVGVPALVVFLNKADMVDDEELLELVEMEVRDLLSEYDFPGDDVPVIVGSALKALEGDAEYEQKILDLMQAVDDYIPTPERDSDKPFMMPVEDVFSITGRGTVATGRVERGQIKVGEEVEIIGITEESMKTTVTGVEMFRKLLDYAEAGDNIGALLRGVAREDVQRGQVLAAPGSITPHTKFKADVYVLSKDEGGRHTPFFTNYRPQFYFRTTDVTGVVNLPEGTEMVMPGDNVEMTVELIAPIAIEDGTRFSIREGGRTVGSGVVTEIQQ</sequence>
<organism>
    <name type="scientific">Staphylococcus carnosus (strain TM300)</name>
    <dbReference type="NCBI Taxonomy" id="396513"/>
    <lineage>
        <taxon>Bacteria</taxon>
        <taxon>Bacillati</taxon>
        <taxon>Bacillota</taxon>
        <taxon>Bacilli</taxon>
        <taxon>Bacillales</taxon>
        <taxon>Staphylococcaceae</taxon>
        <taxon>Staphylococcus</taxon>
    </lineage>
</organism>
<evidence type="ECO:0000250" key="1"/>
<evidence type="ECO:0000255" key="2">
    <source>
        <dbReference type="HAMAP-Rule" id="MF_00118"/>
    </source>
</evidence>
<reference key="1">
    <citation type="journal article" date="2009" name="Appl. Environ. Microbiol.">
        <title>Genome analysis of the meat starter culture bacterium Staphylococcus carnosus TM300.</title>
        <authorList>
            <person name="Rosenstein R."/>
            <person name="Nerz C."/>
            <person name="Biswas L."/>
            <person name="Resch A."/>
            <person name="Raddatz G."/>
            <person name="Schuster S.C."/>
            <person name="Goetz F."/>
        </authorList>
    </citation>
    <scope>NUCLEOTIDE SEQUENCE [LARGE SCALE GENOMIC DNA]</scope>
    <source>
        <strain>TM300</strain>
    </source>
</reference>
<keyword id="KW-0963">Cytoplasm</keyword>
<keyword id="KW-0251">Elongation factor</keyword>
<keyword id="KW-0342">GTP-binding</keyword>
<keyword id="KW-0378">Hydrolase</keyword>
<keyword id="KW-0460">Magnesium</keyword>
<keyword id="KW-0479">Metal-binding</keyword>
<keyword id="KW-0547">Nucleotide-binding</keyword>
<keyword id="KW-0648">Protein biosynthesis</keyword>
<keyword id="KW-1185">Reference proteome</keyword>
<feature type="chain" id="PRO_1000201412" description="Elongation factor Tu">
    <location>
        <begin position="1"/>
        <end position="395"/>
    </location>
</feature>
<feature type="domain" description="tr-type G">
    <location>
        <begin position="10"/>
        <end position="204"/>
    </location>
</feature>
<feature type="region of interest" description="G1" evidence="1">
    <location>
        <begin position="19"/>
        <end position="26"/>
    </location>
</feature>
<feature type="region of interest" description="G2" evidence="1">
    <location>
        <begin position="60"/>
        <end position="64"/>
    </location>
</feature>
<feature type="region of interest" description="G3" evidence="1">
    <location>
        <begin position="81"/>
        <end position="84"/>
    </location>
</feature>
<feature type="region of interest" description="G4" evidence="1">
    <location>
        <begin position="136"/>
        <end position="139"/>
    </location>
</feature>
<feature type="region of interest" description="G5" evidence="1">
    <location>
        <begin position="174"/>
        <end position="176"/>
    </location>
</feature>
<feature type="binding site" evidence="2">
    <location>
        <begin position="19"/>
        <end position="26"/>
    </location>
    <ligand>
        <name>GTP</name>
        <dbReference type="ChEBI" id="CHEBI:37565"/>
    </ligand>
</feature>
<feature type="binding site" evidence="2">
    <location>
        <position position="26"/>
    </location>
    <ligand>
        <name>Mg(2+)</name>
        <dbReference type="ChEBI" id="CHEBI:18420"/>
    </ligand>
</feature>
<feature type="binding site" evidence="2">
    <location>
        <begin position="81"/>
        <end position="85"/>
    </location>
    <ligand>
        <name>GTP</name>
        <dbReference type="ChEBI" id="CHEBI:37565"/>
    </ligand>
</feature>
<feature type="binding site" evidence="2">
    <location>
        <begin position="136"/>
        <end position="139"/>
    </location>
    <ligand>
        <name>GTP</name>
        <dbReference type="ChEBI" id="CHEBI:37565"/>
    </ligand>
</feature>
<comment type="function">
    <text evidence="2">GTP hydrolase that promotes the GTP-dependent binding of aminoacyl-tRNA to the A-site of ribosomes during protein biosynthesis.</text>
</comment>
<comment type="catalytic activity">
    <reaction evidence="2">
        <text>GTP + H2O = GDP + phosphate + H(+)</text>
        <dbReference type="Rhea" id="RHEA:19669"/>
        <dbReference type="ChEBI" id="CHEBI:15377"/>
        <dbReference type="ChEBI" id="CHEBI:15378"/>
        <dbReference type="ChEBI" id="CHEBI:37565"/>
        <dbReference type="ChEBI" id="CHEBI:43474"/>
        <dbReference type="ChEBI" id="CHEBI:58189"/>
        <dbReference type="EC" id="3.6.5.3"/>
    </reaction>
    <physiologicalReaction direction="left-to-right" evidence="2">
        <dbReference type="Rhea" id="RHEA:19670"/>
    </physiologicalReaction>
</comment>
<comment type="subunit">
    <text evidence="2">Monomer.</text>
</comment>
<comment type="subcellular location">
    <subcellularLocation>
        <location evidence="2">Cytoplasm</location>
    </subcellularLocation>
</comment>
<comment type="similarity">
    <text evidence="2">Belongs to the TRAFAC class translation factor GTPase superfamily. Classic translation factor GTPase family. EF-Tu/EF-1A subfamily.</text>
</comment>